<comment type="function">
    <text evidence="2">Biosynthesis of L-glutamate from L-aspartate or L-cysteine. Important regulator of levels of glutamate, the major excitatory neurotransmitter of the vertebrate central nervous system. Acts as a scavenger of glutamate in brain neuroprotection. The aspartate aminotransferase activity is involved in hepatic glucose synthesis during development and in adipocyte glyceroneogenesis. Using L-cysteine as substrate, regulates levels of mercaptopyruvate, an important source of hydrogen sulfide. Mercaptopyruvate is converted into H(2)S via the action of 3-mercaptopyruvate sulfurtransferase (3MST). Hydrogen sulfide is an important synaptic modulator and neuroprotectant in the brain.</text>
</comment>
<comment type="catalytic activity">
    <reaction evidence="2">
        <text>L-aspartate + 2-oxoglutarate = oxaloacetate + L-glutamate</text>
        <dbReference type="Rhea" id="RHEA:21824"/>
        <dbReference type="ChEBI" id="CHEBI:16452"/>
        <dbReference type="ChEBI" id="CHEBI:16810"/>
        <dbReference type="ChEBI" id="CHEBI:29985"/>
        <dbReference type="ChEBI" id="CHEBI:29991"/>
        <dbReference type="EC" id="2.6.1.1"/>
    </reaction>
    <physiologicalReaction direction="left-to-right" evidence="2">
        <dbReference type="Rhea" id="RHEA:21825"/>
    </physiologicalReaction>
</comment>
<comment type="catalytic activity">
    <reaction evidence="2">
        <text>L-cysteine + 2-oxoglutarate = 2-oxo-3-sulfanylpropanoate + L-glutamate</text>
        <dbReference type="Rhea" id="RHEA:17441"/>
        <dbReference type="ChEBI" id="CHEBI:16810"/>
        <dbReference type="ChEBI" id="CHEBI:29985"/>
        <dbReference type="ChEBI" id="CHEBI:35235"/>
        <dbReference type="ChEBI" id="CHEBI:57678"/>
        <dbReference type="EC" id="2.6.1.3"/>
    </reaction>
    <physiologicalReaction direction="left-to-right" evidence="2">
        <dbReference type="Rhea" id="RHEA:17442"/>
    </physiologicalReaction>
</comment>
<comment type="catalytic activity">
    <reaction evidence="3">
        <text>(2S)-2-aminobutanoate + 2-oxoglutarate = 2-oxobutanoate + L-glutamate</text>
        <dbReference type="Rhea" id="RHEA:70223"/>
        <dbReference type="ChEBI" id="CHEBI:16763"/>
        <dbReference type="ChEBI" id="CHEBI:16810"/>
        <dbReference type="ChEBI" id="CHEBI:29985"/>
        <dbReference type="ChEBI" id="CHEBI:74359"/>
    </reaction>
    <physiologicalReaction direction="right-to-left" evidence="3">
        <dbReference type="Rhea" id="RHEA:70225"/>
    </physiologicalReaction>
</comment>
<comment type="catalytic activity">
    <reaction evidence="2">
        <text>3-sulfino-L-alanine + 2-oxoglutarate = 3-sulfinopyruvate + L-glutamate</text>
        <dbReference type="Rhea" id="RHEA:70295"/>
        <dbReference type="ChEBI" id="CHEBI:16810"/>
        <dbReference type="ChEBI" id="CHEBI:29985"/>
        <dbReference type="ChEBI" id="CHEBI:61085"/>
        <dbReference type="ChEBI" id="CHEBI:140699"/>
    </reaction>
    <physiologicalReaction direction="right-to-left" evidence="2">
        <dbReference type="Rhea" id="RHEA:70297"/>
    </physiologicalReaction>
</comment>
<comment type="cofactor">
    <cofactor evidence="1">
        <name>pyridoxal 5'-phosphate</name>
        <dbReference type="ChEBI" id="CHEBI:597326"/>
    </cofactor>
</comment>
<comment type="subunit">
    <text evidence="1">Homodimer.</text>
</comment>
<comment type="subcellular location">
    <subcellularLocation>
        <location evidence="1">Cytoplasm</location>
    </subcellularLocation>
</comment>
<comment type="miscellaneous">
    <text>In eukaryotes there are cytoplasmic, mitochondrial and chloroplastic isozymes.</text>
</comment>
<comment type="similarity">
    <text evidence="4">Belongs to the class-I pyridoxal-phosphate-dependent aminotransferase family.</text>
</comment>
<dbReference type="EC" id="2.6.1.1" evidence="2"/>
<dbReference type="EC" id="2.6.1.3" evidence="2"/>
<dbReference type="EMBL" id="AB222136">
    <property type="protein sequence ID" value="BAF62381.1"/>
    <property type="molecule type" value="mRNA"/>
</dbReference>
<dbReference type="RefSeq" id="NP_001092011.1">
    <property type="nucleotide sequence ID" value="NM_001098541.2"/>
</dbReference>
<dbReference type="SMR" id="A5A6K8"/>
<dbReference type="STRING" id="9598.ENSPTRP00000004968"/>
<dbReference type="PaxDb" id="9598-ENSPTRP00000004968"/>
<dbReference type="GeneID" id="450664"/>
<dbReference type="KEGG" id="ptr:450664"/>
<dbReference type="CTD" id="2805"/>
<dbReference type="eggNOG" id="KOG1412">
    <property type="taxonomic scope" value="Eukaryota"/>
</dbReference>
<dbReference type="InParanoid" id="A5A6K8"/>
<dbReference type="OrthoDB" id="883at9604"/>
<dbReference type="Proteomes" id="UP000002277">
    <property type="component" value="Unplaced"/>
</dbReference>
<dbReference type="GO" id="GO:0005829">
    <property type="term" value="C:cytosol"/>
    <property type="evidence" value="ECO:0000318"/>
    <property type="project" value="GO_Central"/>
</dbReference>
<dbReference type="GO" id="GO:0004069">
    <property type="term" value="F:L-aspartate:2-oxoglutarate aminotransferase activity"/>
    <property type="evidence" value="ECO:0000250"/>
    <property type="project" value="UniProtKB"/>
</dbReference>
<dbReference type="GO" id="GO:0047801">
    <property type="term" value="F:L-cysteine transaminase activity"/>
    <property type="evidence" value="ECO:0000250"/>
    <property type="project" value="UniProtKB"/>
</dbReference>
<dbReference type="GO" id="GO:0030170">
    <property type="term" value="F:pyridoxal phosphate binding"/>
    <property type="evidence" value="ECO:0007669"/>
    <property type="project" value="InterPro"/>
</dbReference>
<dbReference type="GO" id="GO:0006103">
    <property type="term" value="P:2-oxoglutarate metabolic process"/>
    <property type="evidence" value="ECO:0000250"/>
    <property type="project" value="UniProtKB"/>
</dbReference>
<dbReference type="GO" id="GO:0006532">
    <property type="term" value="P:aspartate biosynthetic process"/>
    <property type="evidence" value="ECO:0000318"/>
    <property type="project" value="GO_Central"/>
</dbReference>
<dbReference type="GO" id="GO:0006531">
    <property type="term" value="P:aspartate metabolic process"/>
    <property type="evidence" value="ECO:0000250"/>
    <property type="project" value="UniProtKB"/>
</dbReference>
<dbReference type="GO" id="GO:0006536">
    <property type="term" value="P:glutamate metabolic process"/>
    <property type="evidence" value="ECO:0000250"/>
    <property type="project" value="UniProtKB"/>
</dbReference>
<dbReference type="GO" id="GO:0006114">
    <property type="term" value="P:glycerol biosynthetic process"/>
    <property type="evidence" value="ECO:0000250"/>
    <property type="project" value="UniProtKB"/>
</dbReference>
<dbReference type="CDD" id="cd00609">
    <property type="entry name" value="AAT_like"/>
    <property type="match status" value="1"/>
</dbReference>
<dbReference type="FunFam" id="3.40.640.10:FF:000044">
    <property type="entry name" value="Aspartate aminotransferase"/>
    <property type="match status" value="1"/>
</dbReference>
<dbReference type="FunFam" id="3.90.1150.10:FF:000001">
    <property type="entry name" value="Aspartate aminotransferase"/>
    <property type="match status" value="1"/>
</dbReference>
<dbReference type="Gene3D" id="3.90.1150.10">
    <property type="entry name" value="Aspartate Aminotransferase, domain 1"/>
    <property type="match status" value="1"/>
</dbReference>
<dbReference type="Gene3D" id="3.40.640.10">
    <property type="entry name" value="Type I PLP-dependent aspartate aminotransferase-like (Major domain)"/>
    <property type="match status" value="1"/>
</dbReference>
<dbReference type="InterPro" id="IPR004839">
    <property type="entry name" value="Aminotransferase_I/II_large"/>
</dbReference>
<dbReference type="InterPro" id="IPR000796">
    <property type="entry name" value="Asp_trans"/>
</dbReference>
<dbReference type="InterPro" id="IPR004838">
    <property type="entry name" value="NHTrfase_class1_PyrdxlP-BS"/>
</dbReference>
<dbReference type="InterPro" id="IPR015424">
    <property type="entry name" value="PyrdxlP-dep_Trfase"/>
</dbReference>
<dbReference type="InterPro" id="IPR015421">
    <property type="entry name" value="PyrdxlP-dep_Trfase_major"/>
</dbReference>
<dbReference type="InterPro" id="IPR015422">
    <property type="entry name" value="PyrdxlP-dep_Trfase_small"/>
</dbReference>
<dbReference type="NCBIfam" id="NF006719">
    <property type="entry name" value="PRK09257.1"/>
    <property type="match status" value="1"/>
</dbReference>
<dbReference type="PANTHER" id="PTHR11879">
    <property type="entry name" value="ASPARTATE AMINOTRANSFERASE"/>
    <property type="match status" value="1"/>
</dbReference>
<dbReference type="PANTHER" id="PTHR11879:SF3">
    <property type="entry name" value="ASPARTATE AMINOTRANSFERASE, CYTOPLASMIC"/>
    <property type="match status" value="1"/>
</dbReference>
<dbReference type="Pfam" id="PF00155">
    <property type="entry name" value="Aminotran_1_2"/>
    <property type="match status" value="1"/>
</dbReference>
<dbReference type="PRINTS" id="PR00799">
    <property type="entry name" value="TRANSAMINASE"/>
</dbReference>
<dbReference type="SUPFAM" id="SSF53383">
    <property type="entry name" value="PLP-dependent transferases"/>
    <property type="match status" value="1"/>
</dbReference>
<dbReference type="PROSITE" id="PS00105">
    <property type="entry name" value="AA_TRANSFER_CLASS_1"/>
    <property type="match status" value="1"/>
</dbReference>
<keyword id="KW-0028">Amino-acid biosynthesis</keyword>
<keyword id="KW-0032">Aminotransferase</keyword>
<keyword id="KW-0963">Cytoplasm</keyword>
<keyword id="KW-0597">Phosphoprotein</keyword>
<keyword id="KW-0663">Pyridoxal phosphate</keyword>
<keyword id="KW-1185">Reference proteome</keyword>
<keyword id="KW-0808">Transferase</keyword>
<sequence>MAPPSVFAEVPQAQPVLVFKLTADFREDPDPRKVNLGVGAYRTDDCHPWVLPVVKKVEQKIANDNSLNHEYLPILGLAEFRSCASRLALGDDSPALKEKRVGGVQSLGGTGALRIGADFLARWYNGTNNKNTPVYVSSPTWENHNAVFSAAGFKDIRSYRYWDAEKRGLDLQGFLNDLENAPEFSIVVLHACAHNPTGIDPTPEQWKQIASVMKHRFLFPFFDSAYQGFASGNLERDAWAIRYFVSEGFEFFCAQSFSKNFGLYNERVGNLTVVGKEPESILQVLSQMEKIVRITWSNPPAQGARIVASTLSNPELFEEWTGNVKTMADRILSMRSELRARLEALKTPGTWNHITDQIGMFSFTGLNPKQVEYLVNEKHIYLLPSGRINVSGLTTKNLDYVATSIHEAVTKIQ</sequence>
<protein>
    <recommendedName>
        <fullName evidence="3">Aspartate aminotransferase, cytoplasmic</fullName>
        <shortName>cAspAT</shortName>
        <ecNumber evidence="2">2.6.1.1</ecNumber>
        <ecNumber evidence="2">2.6.1.3</ecNumber>
    </recommendedName>
    <alternativeName>
        <fullName>Cysteine aminotransferase, cytoplasmic</fullName>
    </alternativeName>
    <alternativeName>
        <fullName>Cysteine transaminase, cytoplasmic</fullName>
        <shortName>cCAT</shortName>
    </alternativeName>
    <alternativeName>
        <fullName>Glutamate oxaloacetate transaminase 1</fullName>
    </alternativeName>
    <alternativeName>
        <fullName>Transaminase A</fullName>
    </alternativeName>
</protein>
<gene>
    <name evidence="3" type="primary">GOT1</name>
</gene>
<reference key="1">
    <citation type="journal article" date="2007" name="Gene">
        <title>Mapping of chimpanzee full-length cDNAs onto the human genome unveils large potential divergence of the transcriptome.</title>
        <authorList>
            <person name="Sakate R."/>
            <person name="Suto Y."/>
            <person name="Imanishi T."/>
            <person name="Tanoue T."/>
            <person name="Hida M."/>
            <person name="Hayasaka I."/>
            <person name="Kusuda J."/>
            <person name="Gojobori T."/>
            <person name="Hashimoto K."/>
            <person name="Hirai M."/>
        </authorList>
    </citation>
    <scope>NUCLEOTIDE SEQUENCE [MRNA]</scope>
    <source>
        <tissue>Brain</tissue>
    </source>
</reference>
<organism>
    <name type="scientific">Pan troglodytes</name>
    <name type="common">Chimpanzee</name>
    <dbReference type="NCBI Taxonomy" id="9598"/>
    <lineage>
        <taxon>Eukaryota</taxon>
        <taxon>Metazoa</taxon>
        <taxon>Chordata</taxon>
        <taxon>Craniata</taxon>
        <taxon>Vertebrata</taxon>
        <taxon>Euteleostomi</taxon>
        <taxon>Mammalia</taxon>
        <taxon>Eutheria</taxon>
        <taxon>Euarchontoglires</taxon>
        <taxon>Primates</taxon>
        <taxon>Haplorrhini</taxon>
        <taxon>Catarrhini</taxon>
        <taxon>Hominidae</taxon>
        <taxon>Pan</taxon>
    </lineage>
</organism>
<feature type="chain" id="PRO_0000297546" description="Aspartate aminotransferase, cytoplasmic">
    <location>
        <begin position="1"/>
        <end position="413"/>
    </location>
</feature>
<feature type="binding site" evidence="1">
    <location>
        <position position="39"/>
    </location>
    <ligand>
        <name>L-aspartate</name>
        <dbReference type="ChEBI" id="CHEBI:29991"/>
    </ligand>
</feature>
<feature type="binding site" evidence="1">
    <location>
        <position position="141"/>
    </location>
    <ligand>
        <name>L-aspartate</name>
        <dbReference type="ChEBI" id="CHEBI:29991"/>
    </ligand>
</feature>
<feature type="binding site" evidence="1">
    <location>
        <position position="195"/>
    </location>
    <ligand>
        <name>L-aspartate</name>
        <dbReference type="ChEBI" id="CHEBI:29991"/>
    </ligand>
</feature>
<feature type="binding site" evidence="1">
    <location>
        <position position="387"/>
    </location>
    <ligand>
        <name>L-aspartate</name>
        <dbReference type="ChEBI" id="CHEBI:29991"/>
    </ligand>
</feature>
<feature type="modified residue" description="Phosphoserine" evidence="2">
    <location>
        <position position="149"/>
    </location>
</feature>
<feature type="modified residue" description="N6-(pyridoxal phosphate)lysine" evidence="1">
    <location>
        <position position="259"/>
    </location>
</feature>
<proteinExistence type="evidence at transcript level"/>
<name>AATC_PANTR</name>
<evidence type="ECO:0000250" key="1"/>
<evidence type="ECO:0000250" key="2">
    <source>
        <dbReference type="UniProtKB" id="P13221"/>
    </source>
</evidence>
<evidence type="ECO:0000250" key="3">
    <source>
        <dbReference type="UniProtKB" id="P17174"/>
    </source>
</evidence>
<evidence type="ECO:0000305" key="4"/>
<accession>A5A6K8</accession>